<evidence type="ECO:0000250" key="1"/>
<evidence type="ECO:0000269" key="2">
    <source>
    </source>
</evidence>
<evidence type="ECO:0000305" key="3"/>
<feature type="chain" id="PRO_0000058910" description="Serine/threonine-protein phosphatase 2">
    <location>
        <begin position="1"/>
        <end position="218"/>
    </location>
</feature>
<feature type="active site" description="Proton donor" evidence="1">
    <location>
        <position position="78"/>
    </location>
</feature>
<feature type="binding site" evidence="1">
    <location>
        <position position="22"/>
    </location>
    <ligand>
        <name>Mn(2+)</name>
        <dbReference type="ChEBI" id="CHEBI:29035"/>
        <label>1</label>
    </ligand>
</feature>
<feature type="binding site" evidence="1">
    <location>
        <position position="24"/>
    </location>
    <ligand>
        <name>Mn(2+)</name>
        <dbReference type="ChEBI" id="CHEBI:29035"/>
        <label>1</label>
    </ligand>
</feature>
<feature type="binding site" evidence="1">
    <location>
        <position position="51"/>
    </location>
    <ligand>
        <name>Mn(2+)</name>
        <dbReference type="ChEBI" id="CHEBI:29035"/>
        <label>1</label>
    </ligand>
</feature>
<feature type="binding site" evidence="1">
    <location>
        <position position="51"/>
    </location>
    <ligand>
        <name>Mn(2+)</name>
        <dbReference type="ChEBI" id="CHEBI:29035"/>
        <label>2</label>
    </ligand>
</feature>
<feature type="binding site" evidence="1">
    <location>
        <position position="77"/>
    </location>
    <ligand>
        <name>Mn(2+)</name>
        <dbReference type="ChEBI" id="CHEBI:29035"/>
        <label>2</label>
    </ligand>
</feature>
<feature type="binding site" evidence="1">
    <location>
        <position position="187"/>
    </location>
    <ligand>
        <name>Mn(2+)</name>
        <dbReference type="ChEBI" id="CHEBI:29035"/>
        <label>2</label>
    </ligand>
</feature>
<feature type="mutagenesis site" description="In prpB17; loss of function." evidence="2">
    <original>H</original>
    <variation>N</variation>
    <location>
        <position position="78"/>
    </location>
</feature>
<sequence>MPSTRYQKINAHHYRHIWVVGDIHGEYQLLQSRLHQLSFFPKIDLLISVGDNIDRGPESLDVLRLLNQPWFTSVKGNHEAMALEAFETGDGNMWLASGGDWFFDLNDSEQQEAIDLLLKFHHLPHIIEITNDNIKYAIAHADYPGSEYLFGKEIAESELLWPVDRVQKSLNGELQQINGADYFIFGHMMFDNIQTFANQIYIDTGSPNSGRLSFYKIK</sequence>
<dbReference type="EC" id="3.1.3.16"/>
<dbReference type="EMBL" id="U51682">
    <property type="protein sequence ID" value="AAB53933.1"/>
    <property type="molecule type" value="Genomic_DNA"/>
</dbReference>
<dbReference type="EMBL" id="U29579">
    <property type="protein sequence ID" value="AAA69244.1"/>
    <property type="molecule type" value="Genomic_DNA"/>
</dbReference>
<dbReference type="EMBL" id="U00096">
    <property type="protein sequence ID" value="AAC75776.1"/>
    <property type="molecule type" value="Genomic_DNA"/>
</dbReference>
<dbReference type="EMBL" id="AP009048">
    <property type="protein sequence ID" value="BAE76811.1"/>
    <property type="molecule type" value="Genomic_DNA"/>
</dbReference>
<dbReference type="PIR" id="B65054">
    <property type="entry name" value="B65054"/>
</dbReference>
<dbReference type="RefSeq" id="NP_417214.1">
    <property type="nucleotide sequence ID" value="NC_000913.3"/>
</dbReference>
<dbReference type="RefSeq" id="WP_001141337.1">
    <property type="nucleotide sequence ID" value="NZ_LN832404.1"/>
</dbReference>
<dbReference type="SMR" id="P55799"/>
<dbReference type="BioGRID" id="4261420">
    <property type="interactions" value="20"/>
</dbReference>
<dbReference type="FunCoup" id="P55799">
    <property type="interactions" value="86"/>
</dbReference>
<dbReference type="IntAct" id="P55799">
    <property type="interactions" value="5"/>
</dbReference>
<dbReference type="STRING" id="511145.b2734"/>
<dbReference type="PaxDb" id="511145-b2734"/>
<dbReference type="EnsemblBacteria" id="AAC75776">
    <property type="protein sequence ID" value="AAC75776"/>
    <property type="gene ID" value="b2734"/>
</dbReference>
<dbReference type="GeneID" id="947196"/>
<dbReference type="KEGG" id="ecj:JW2704"/>
<dbReference type="KEGG" id="eco:b2734"/>
<dbReference type="KEGG" id="ecoc:C3026_15040"/>
<dbReference type="PATRIC" id="fig|1411691.4.peg.4006"/>
<dbReference type="EchoBASE" id="EB2905"/>
<dbReference type="eggNOG" id="COG0639">
    <property type="taxonomic scope" value="Bacteria"/>
</dbReference>
<dbReference type="HOGENOM" id="CLU_023125_1_1_6"/>
<dbReference type="InParanoid" id="P55799"/>
<dbReference type="OMA" id="DPACDRL"/>
<dbReference type="OrthoDB" id="5296354at2"/>
<dbReference type="PhylomeDB" id="P55799"/>
<dbReference type="BioCyc" id="EcoCyc:G7415-MONOMER"/>
<dbReference type="BioCyc" id="MetaCyc:G7415-MONOMER"/>
<dbReference type="PRO" id="PR:P55799"/>
<dbReference type="Proteomes" id="UP000000625">
    <property type="component" value="Chromosome"/>
</dbReference>
<dbReference type="GO" id="GO:0005737">
    <property type="term" value="C:cytoplasm"/>
    <property type="evidence" value="ECO:0000318"/>
    <property type="project" value="GO_Central"/>
</dbReference>
<dbReference type="GO" id="GO:0008803">
    <property type="term" value="F:bis(5'-nucleosyl)-tetraphosphatase (symmetrical) activity"/>
    <property type="evidence" value="ECO:0000318"/>
    <property type="project" value="GO_Central"/>
</dbReference>
<dbReference type="GO" id="GO:0046872">
    <property type="term" value="F:metal ion binding"/>
    <property type="evidence" value="ECO:0007669"/>
    <property type="project" value="UniProtKB-KW"/>
</dbReference>
<dbReference type="GO" id="GO:0016791">
    <property type="term" value="F:phosphatase activity"/>
    <property type="evidence" value="ECO:0000318"/>
    <property type="project" value="GO_Central"/>
</dbReference>
<dbReference type="GO" id="GO:0004722">
    <property type="term" value="F:protein serine/threonine phosphatase activity"/>
    <property type="evidence" value="ECO:0007669"/>
    <property type="project" value="UniProtKB-EC"/>
</dbReference>
<dbReference type="GO" id="GO:0008138">
    <property type="term" value="F:protein tyrosine/serine/threonine phosphatase activity"/>
    <property type="evidence" value="ECO:0000314"/>
    <property type="project" value="EcoCyc"/>
</dbReference>
<dbReference type="GO" id="GO:0110154">
    <property type="term" value="P:RNA decapping"/>
    <property type="evidence" value="ECO:0000318"/>
    <property type="project" value="GO_Central"/>
</dbReference>
<dbReference type="CDD" id="cd07424">
    <property type="entry name" value="MPP_PrpA_PrpB"/>
    <property type="match status" value="1"/>
</dbReference>
<dbReference type="FunFam" id="3.60.21.10:FF:000084">
    <property type="entry name" value="Serine/threonine-protein phosphatase 2"/>
    <property type="match status" value="1"/>
</dbReference>
<dbReference type="Gene3D" id="3.60.21.10">
    <property type="match status" value="1"/>
</dbReference>
<dbReference type="InterPro" id="IPR050126">
    <property type="entry name" value="Ap4A_hydrolase"/>
</dbReference>
<dbReference type="InterPro" id="IPR004843">
    <property type="entry name" value="Calcineurin-like_PHP_ApaH"/>
</dbReference>
<dbReference type="InterPro" id="IPR029052">
    <property type="entry name" value="Metallo-depent_PP-like"/>
</dbReference>
<dbReference type="InterPro" id="IPR006186">
    <property type="entry name" value="Ser/Thr-sp_prot-phosphatase"/>
</dbReference>
<dbReference type="NCBIfam" id="NF007425">
    <property type="entry name" value="PRK09968.1"/>
    <property type="match status" value="1"/>
</dbReference>
<dbReference type="PANTHER" id="PTHR42850">
    <property type="entry name" value="METALLOPHOSPHOESTERASE"/>
    <property type="match status" value="1"/>
</dbReference>
<dbReference type="PANTHER" id="PTHR42850:SF8">
    <property type="entry name" value="SERINE_THREONINE-PROTEIN PHOSPHATASE 2"/>
    <property type="match status" value="1"/>
</dbReference>
<dbReference type="Pfam" id="PF00149">
    <property type="entry name" value="Metallophos"/>
    <property type="match status" value="1"/>
</dbReference>
<dbReference type="SUPFAM" id="SSF56300">
    <property type="entry name" value="Metallo-dependent phosphatases"/>
    <property type="match status" value="1"/>
</dbReference>
<dbReference type="PROSITE" id="PS00125">
    <property type="entry name" value="SER_THR_PHOSPHATASE"/>
    <property type="match status" value="1"/>
</dbReference>
<reference key="1">
    <citation type="journal article" date="1997" name="EMBO J.">
        <title>Signal transduction pathways in response to protein misfolding in the extracytoplasmic compartments of E. coli: role of two new phosphoprotein phosphatases PrpA and PrpB.</title>
        <authorList>
            <person name="Missiakas D."/>
            <person name="Raina S."/>
        </authorList>
    </citation>
    <scope>NUCLEOTIDE SEQUENCE [GENOMIC DNA]</scope>
    <scope>MUTAGENESIS OF HIS-78</scope>
    <source>
        <strain>K12 / MC4100 / ATCC 35695 / DSM 6574</strain>
    </source>
</reference>
<reference key="2">
    <citation type="journal article" date="1997" name="Science">
        <title>The complete genome sequence of Escherichia coli K-12.</title>
        <authorList>
            <person name="Blattner F.R."/>
            <person name="Plunkett G. III"/>
            <person name="Bloch C.A."/>
            <person name="Perna N.T."/>
            <person name="Burland V."/>
            <person name="Riley M."/>
            <person name="Collado-Vides J."/>
            <person name="Glasner J.D."/>
            <person name="Rode C.K."/>
            <person name="Mayhew G.F."/>
            <person name="Gregor J."/>
            <person name="Davis N.W."/>
            <person name="Kirkpatrick H.A."/>
            <person name="Goeden M.A."/>
            <person name="Rose D.J."/>
            <person name="Mau B."/>
            <person name="Shao Y."/>
        </authorList>
    </citation>
    <scope>NUCLEOTIDE SEQUENCE [LARGE SCALE GENOMIC DNA]</scope>
    <source>
        <strain>K12 / MG1655 / ATCC 47076</strain>
    </source>
</reference>
<reference key="3">
    <citation type="journal article" date="2006" name="Mol. Syst. Biol.">
        <title>Highly accurate genome sequences of Escherichia coli K-12 strains MG1655 and W3110.</title>
        <authorList>
            <person name="Hayashi K."/>
            <person name="Morooka N."/>
            <person name="Yamamoto Y."/>
            <person name="Fujita K."/>
            <person name="Isono K."/>
            <person name="Choi S."/>
            <person name="Ohtsubo E."/>
            <person name="Baba T."/>
            <person name="Wanner B.L."/>
            <person name="Mori H."/>
            <person name="Horiuchi T."/>
        </authorList>
    </citation>
    <scope>NUCLEOTIDE SEQUENCE [LARGE SCALE GENOMIC DNA]</scope>
    <source>
        <strain>K12 / W3110 / ATCC 27325 / DSM 5911</strain>
    </source>
</reference>
<protein>
    <recommendedName>
        <fullName>Serine/threonine-protein phosphatase 2</fullName>
        <ecNumber>3.1.3.16</ecNumber>
    </recommendedName>
</protein>
<keyword id="KW-0378">Hydrolase</keyword>
<keyword id="KW-0464">Manganese</keyword>
<keyword id="KW-0479">Metal-binding</keyword>
<keyword id="KW-0904">Protein phosphatase</keyword>
<keyword id="KW-1185">Reference proteome</keyword>
<name>PRP2_ECOLI</name>
<comment type="function">
    <text>Has been shown, in vitro, to act on Ser, Thr and Tyr-phosphorylated substrates.</text>
</comment>
<comment type="catalytic activity">
    <reaction>
        <text>O-phospho-L-seryl-[protein] + H2O = L-seryl-[protein] + phosphate</text>
        <dbReference type="Rhea" id="RHEA:20629"/>
        <dbReference type="Rhea" id="RHEA-COMP:9863"/>
        <dbReference type="Rhea" id="RHEA-COMP:11604"/>
        <dbReference type="ChEBI" id="CHEBI:15377"/>
        <dbReference type="ChEBI" id="CHEBI:29999"/>
        <dbReference type="ChEBI" id="CHEBI:43474"/>
        <dbReference type="ChEBI" id="CHEBI:83421"/>
        <dbReference type="EC" id="3.1.3.16"/>
    </reaction>
</comment>
<comment type="catalytic activity">
    <reaction>
        <text>O-phospho-L-threonyl-[protein] + H2O = L-threonyl-[protein] + phosphate</text>
        <dbReference type="Rhea" id="RHEA:47004"/>
        <dbReference type="Rhea" id="RHEA-COMP:11060"/>
        <dbReference type="Rhea" id="RHEA-COMP:11605"/>
        <dbReference type="ChEBI" id="CHEBI:15377"/>
        <dbReference type="ChEBI" id="CHEBI:30013"/>
        <dbReference type="ChEBI" id="CHEBI:43474"/>
        <dbReference type="ChEBI" id="CHEBI:61977"/>
        <dbReference type="EC" id="3.1.3.16"/>
    </reaction>
</comment>
<comment type="cofactor">
    <cofactor evidence="1">
        <name>Mn(2+)</name>
        <dbReference type="ChEBI" id="CHEBI:29035"/>
    </cofactor>
    <text evidence="1">Binds 2 manganese ions per subunit.</text>
</comment>
<comment type="similarity">
    <text evidence="3">Belongs to the PPP phosphatase family.</text>
</comment>
<accession>P55799</accession>
<accession>Q2MA95</accession>
<gene>
    <name type="primary">pphB</name>
    <name type="synonym">prpB</name>
    <name type="synonym">ygbH</name>
    <name type="ordered locus">b2734</name>
    <name type="ordered locus">JW2704</name>
</gene>
<proteinExistence type="evidence at protein level"/>
<organism>
    <name type="scientific">Escherichia coli (strain K12)</name>
    <dbReference type="NCBI Taxonomy" id="83333"/>
    <lineage>
        <taxon>Bacteria</taxon>
        <taxon>Pseudomonadati</taxon>
        <taxon>Pseudomonadota</taxon>
        <taxon>Gammaproteobacteria</taxon>
        <taxon>Enterobacterales</taxon>
        <taxon>Enterobacteriaceae</taxon>
        <taxon>Escherichia</taxon>
    </lineage>
</organism>